<reference key="1">
    <citation type="journal article" date="2001" name="Nature">
        <title>Genome sequence of enterohaemorrhagic Escherichia coli O157:H7.</title>
        <authorList>
            <person name="Perna N.T."/>
            <person name="Plunkett G. III"/>
            <person name="Burland V."/>
            <person name="Mau B."/>
            <person name="Glasner J.D."/>
            <person name="Rose D.J."/>
            <person name="Mayhew G.F."/>
            <person name="Evans P.S."/>
            <person name="Gregor J."/>
            <person name="Kirkpatrick H.A."/>
            <person name="Posfai G."/>
            <person name="Hackett J."/>
            <person name="Klink S."/>
            <person name="Boutin A."/>
            <person name="Shao Y."/>
            <person name="Miller L."/>
            <person name="Grotbeck E.J."/>
            <person name="Davis N.W."/>
            <person name="Lim A."/>
            <person name="Dimalanta E.T."/>
            <person name="Potamousis K."/>
            <person name="Apodaca J."/>
            <person name="Anantharaman T.S."/>
            <person name="Lin J."/>
            <person name="Yen G."/>
            <person name="Schwartz D.C."/>
            <person name="Welch R.A."/>
            <person name="Blattner F.R."/>
        </authorList>
    </citation>
    <scope>NUCLEOTIDE SEQUENCE [LARGE SCALE GENOMIC DNA]</scope>
    <source>
        <strain>O157:H7 / EDL933 / ATCC 700927 / EHEC</strain>
    </source>
</reference>
<reference key="2">
    <citation type="journal article" date="2001" name="DNA Res.">
        <title>Complete genome sequence of enterohemorrhagic Escherichia coli O157:H7 and genomic comparison with a laboratory strain K-12.</title>
        <authorList>
            <person name="Hayashi T."/>
            <person name="Makino K."/>
            <person name="Ohnishi M."/>
            <person name="Kurokawa K."/>
            <person name="Ishii K."/>
            <person name="Yokoyama K."/>
            <person name="Han C.-G."/>
            <person name="Ohtsubo E."/>
            <person name="Nakayama K."/>
            <person name="Murata T."/>
            <person name="Tanaka M."/>
            <person name="Tobe T."/>
            <person name="Iida T."/>
            <person name="Takami H."/>
            <person name="Honda T."/>
            <person name="Sasakawa C."/>
            <person name="Ogasawara N."/>
            <person name="Yasunaga T."/>
            <person name="Kuhara S."/>
            <person name="Shiba T."/>
            <person name="Hattori M."/>
            <person name="Shinagawa H."/>
        </authorList>
    </citation>
    <scope>NUCLEOTIDE SEQUENCE [LARGE SCALE GENOMIC DNA]</scope>
    <source>
        <strain>O157:H7 / Sakai / RIMD 0509952 / EHEC</strain>
    </source>
</reference>
<reference key="3">
    <citation type="submission" date="2015-09" db="EMBL/GenBank/DDBJ databases">
        <title>Draft genome sequence of three European lab-derivates from the enterohemorrhagic E. coli O157:H7 strain EDL933, including two plasmids.</title>
        <authorList>
            <person name="Fellner L."/>
            <person name="Huptas C."/>
            <person name="Simon S."/>
            <person name="Krementowski A."/>
            <person name="Scherer S."/>
            <person name="Neuhaus K."/>
        </authorList>
    </citation>
    <scope>NUCLEOTIDE SEQUENCE [LARGE SCALE GENOMIC DNA]</scope>
    <source>
        <strain>WS4202</strain>
    </source>
</reference>
<reference key="4">
    <citation type="submission" date="2015-11" db="EMBL/GenBank/DDBJ databases">
        <title>Genome sequence of Escherichia coli O157:H7 strains isolated from cattle in Javadabad, Iran.</title>
        <authorList>
            <person name="Staji H."/>
            <person name="Salehi T.Z."/>
            <person name="Orsini M."/>
            <person name="Tonelli A."/>
        </authorList>
    </citation>
    <scope>NUCLEOTIDE SEQUENCE [LARGE SCALE GENOMIC DNA]</scope>
    <source>
        <strain>G10</strain>
    </source>
</reference>
<reference key="5">
    <citation type="journal article" date="2011" name="Nat. Struct. Mol. Biol.">
        <title>Genetic selection designed to stabilize proteins uncovers a chaperone called Spy.</title>
        <authorList>
            <person name="Quan S."/>
            <person name="Koldewey P."/>
            <person name="Tapley T."/>
            <person name="Kirsch N."/>
            <person name="Ruane K.M."/>
            <person name="Pfizenmaier J."/>
            <person name="Shi R."/>
            <person name="Hofmann S."/>
            <person name="Foit L."/>
            <person name="Ren G."/>
            <person name="Jakob U."/>
            <person name="Xu Z."/>
            <person name="Cygler M."/>
            <person name="Bardwell J.C."/>
        </authorList>
    </citation>
    <scope>X-RAY CRYSTALLOGRAPHY (2.60 ANGSTROMS) OF 52-147</scope>
    <scope>FUNCTION</scope>
    <scope>SUBUNIT</scope>
    <scope>DOMAIN</scope>
    <source>
        <strain>O157:H7 / EDL933 / ATCC 700927 / EHEC</strain>
    </source>
</reference>
<feature type="signal peptide" evidence="1">
    <location>
        <begin position="1"/>
        <end position="23"/>
    </location>
</feature>
<feature type="chain" id="PRO_5005941623" description="Periplasmic chaperone Spy">
    <location>
        <begin position="24"/>
        <end position="161"/>
    </location>
</feature>
<feature type="region of interest" description="Disordered" evidence="2">
    <location>
        <begin position="141"/>
        <end position="161"/>
    </location>
</feature>
<feature type="compositionally biased region" description="Basic and acidic residues" evidence="2">
    <location>
        <begin position="142"/>
        <end position="151"/>
    </location>
</feature>
<feature type="helix" evidence="7">
    <location>
        <begin position="59"/>
        <end position="70"/>
    </location>
</feature>
<feature type="turn" evidence="7">
    <location>
        <begin position="71"/>
        <end position="74"/>
    </location>
</feature>
<feature type="helix" evidence="7">
    <location>
        <begin position="81"/>
        <end position="91"/>
    </location>
</feature>
<feature type="strand" evidence="7">
    <location>
        <begin position="92"/>
        <end position="95"/>
    </location>
</feature>
<feature type="helix" evidence="7">
    <location>
        <begin position="98"/>
        <end position="107"/>
    </location>
</feature>
<feature type="helix" evidence="7">
    <location>
        <begin position="109"/>
        <end position="127"/>
    </location>
</feature>
<feature type="helix" evidence="7">
    <location>
        <begin position="132"/>
        <end position="144"/>
    </location>
</feature>
<name>SPY_ECO57</name>
<accession>Q8XDZ4</accession>
<accession>Q7ADE9</accession>
<proteinExistence type="evidence at protein level"/>
<dbReference type="EMBL" id="AE005174">
    <property type="protein sequence ID" value="AAG56729.1"/>
    <property type="molecule type" value="Genomic_DNA"/>
</dbReference>
<dbReference type="EMBL" id="BA000007">
    <property type="protein sequence ID" value="BAB35872.1"/>
    <property type="molecule type" value="Genomic_DNA"/>
</dbReference>
<dbReference type="EMBL" id="CP012802">
    <property type="protein sequence ID" value="ALH90076.1"/>
    <property type="molecule type" value="Genomic_DNA"/>
</dbReference>
<dbReference type="EMBL" id="LMXL01000076">
    <property type="protein sequence ID" value="KRQ10719.1"/>
    <property type="molecule type" value="Genomic_DNA"/>
</dbReference>
<dbReference type="PIR" id="A99935">
    <property type="entry name" value="A99935"/>
</dbReference>
<dbReference type="PIR" id="E85783">
    <property type="entry name" value="E85783"/>
</dbReference>
<dbReference type="RefSeq" id="NP_310476.1">
    <property type="nucleotide sequence ID" value="NC_002695.1"/>
</dbReference>
<dbReference type="RefSeq" id="WP_001228981.1">
    <property type="nucleotide sequence ID" value="NZ_VOAI01000007.1"/>
</dbReference>
<dbReference type="PDB" id="3O39">
    <property type="method" value="X-ray"/>
    <property type="resolution" value="2.60 A"/>
    <property type="chains" value="A/B=52-147"/>
</dbReference>
<dbReference type="PDBsum" id="3O39"/>
<dbReference type="SMR" id="Q8XDZ4"/>
<dbReference type="STRING" id="155864.Z2775"/>
<dbReference type="GeneID" id="75203049"/>
<dbReference type="GeneID" id="913975"/>
<dbReference type="KEGG" id="ece:Z2775"/>
<dbReference type="KEGG" id="ecs:ECs_2449"/>
<dbReference type="PATRIC" id="fig|386585.9.peg.2563"/>
<dbReference type="eggNOG" id="COG3678">
    <property type="taxonomic scope" value="Bacteria"/>
</dbReference>
<dbReference type="HOGENOM" id="CLU_124352_1_0_6"/>
<dbReference type="OMA" id="HDMMFKD"/>
<dbReference type="EvolutionaryTrace" id="Q8XDZ4"/>
<dbReference type="Proteomes" id="UP000000558">
    <property type="component" value="Chromosome"/>
</dbReference>
<dbReference type="Proteomes" id="UP000002519">
    <property type="component" value="Chromosome"/>
</dbReference>
<dbReference type="GO" id="GO:0030288">
    <property type="term" value="C:outer membrane-bounded periplasmic space"/>
    <property type="evidence" value="ECO:0007669"/>
    <property type="project" value="TreeGrafter"/>
</dbReference>
<dbReference type="GO" id="GO:0051082">
    <property type="term" value="F:unfolded protein binding"/>
    <property type="evidence" value="ECO:0007669"/>
    <property type="project" value="TreeGrafter"/>
</dbReference>
<dbReference type="CDD" id="cd09916">
    <property type="entry name" value="CpxP_like"/>
    <property type="match status" value="1"/>
</dbReference>
<dbReference type="FunFam" id="1.20.120.1490:FF:000002">
    <property type="entry name" value="ATP-independent periplasmic protein-refolding chaperone"/>
    <property type="match status" value="1"/>
</dbReference>
<dbReference type="Gene3D" id="1.20.120.1490">
    <property type="match status" value="1"/>
</dbReference>
<dbReference type="InterPro" id="IPR052211">
    <property type="entry name" value="Cpx_auxiliary_protein"/>
</dbReference>
<dbReference type="InterPro" id="IPR012899">
    <property type="entry name" value="LTXXQ"/>
</dbReference>
<dbReference type="NCBIfam" id="NF007769">
    <property type="entry name" value="PRK10455.1"/>
    <property type="match status" value="1"/>
</dbReference>
<dbReference type="PANTHER" id="PTHR38102">
    <property type="entry name" value="PERIPLASMIC CHAPERONE SPY"/>
    <property type="match status" value="1"/>
</dbReference>
<dbReference type="PANTHER" id="PTHR38102:SF1">
    <property type="entry name" value="PERIPLASMIC CHAPERONE SPY"/>
    <property type="match status" value="1"/>
</dbReference>
<dbReference type="Pfam" id="PF07813">
    <property type="entry name" value="LTXXQ"/>
    <property type="match status" value="1"/>
</dbReference>
<dbReference type="PIRSF" id="PIRSF034445">
    <property type="entry name" value="CpxP_Spy"/>
    <property type="match status" value="1"/>
</dbReference>
<organism>
    <name type="scientific">Escherichia coli O157:H7</name>
    <dbReference type="NCBI Taxonomy" id="83334"/>
    <lineage>
        <taxon>Bacteria</taxon>
        <taxon>Pseudomonadati</taxon>
        <taxon>Pseudomonadota</taxon>
        <taxon>Gammaproteobacteria</taxon>
        <taxon>Enterobacterales</taxon>
        <taxon>Enterobacteriaceae</taxon>
        <taxon>Escherichia</taxon>
    </lineage>
</organism>
<protein>
    <recommendedName>
        <fullName evidence="4">Periplasmic chaperone Spy</fullName>
    </recommendedName>
    <alternativeName>
        <fullName>Spheroplast protein Y</fullName>
    </alternativeName>
</protein>
<comment type="function">
    <text evidence="6">An ATP-independent periplasmic chaperone, decreases protein aggregation and helps protein refolding. Binds substrate over a large region. Protect proteins in vitro against tannin inactivation; tannins have antimicrobial activity. Overexpression enhances the stability of otherwise unstable periplasmic proteins (PubMed:21317898).</text>
</comment>
<comment type="subunit">
    <text evidence="3">Homodimer.</text>
</comment>
<comment type="subcellular location">
    <subcellularLocation>
        <location evidence="6">Periplasm</location>
    </subcellularLocation>
</comment>
<comment type="domain">
    <text evidence="3">Has an elongated cradle shape.</text>
</comment>
<comment type="similarity">
    <text evidence="5">Belongs to the CpxP/Spy family.</text>
</comment>
<keyword id="KW-0002">3D-structure</keyword>
<keyword id="KW-0143">Chaperone</keyword>
<keyword id="KW-0574">Periplasm</keyword>
<keyword id="KW-1185">Reference proteome</keyword>
<keyword id="KW-0732">Signal</keyword>
<keyword id="KW-0346">Stress response</keyword>
<evidence type="ECO:0000255" key="1"/>
<evidence type="ECO:0000256" key="2">
    <source>
        <dbReference type="SAM" id="MobiDB-lite"/>
    </source>
</evidence>
<evidence type="ECO:0000269" key="3">
    <source>
    </source>
</evidence>
<evidence type="ECO:0000303" key="4">
    <source>
    </source>
</evidence>
<evidence type="ECO:0000305" key="5"/>
<evidence type="ECO:0000305" key="6">
    <source>
    </source>
</evidence>
<evidence type="ECO:0007829" key="7">
    <source>
        <dbReference type="PDB" id="3O39"/>
    </source>
</evidence>
<sequence length="161" mass="18171">MRKLTALFVASTLALGAANLAHAADTTTAAPADAKPMMHHKGKFGPHQDMMFKDLNLTDAQKQQIREIMKGQRDQMKRPPLEERRAMHDIIASDTFDKAKAEAQIAKMEEQRKANMLAHMETQNKIYNILTPEQKKQFNANFEKRLTERPAAKGKMPATAE</sequence>
<gene>
    <name type="primary">spy</name>
    <name type="ordered locus">ECs2449</name>
    <name type="ordered locus">Z2775</name>
    <name type="ORF">AO055_07240</name>
    <name type="ORF">ASO15_12485</name>
</gene>